<gene>
    <name type="primary">suhB</name>
    <name type="ordered locus">bbp_264</name>
</gene>
<organism>
    <name type="scientific">Buchnera aphidicola subsp. Baizongia pistaciae (strain Bp)</name>
    <dbReference type="NCBI Taxonomy" id="224915"/>
    <lineage>
        <taxon>Bacteria</taxon>
        <taxon>Pseudomonadati</taxon>
        <taxon>Pseudomonadota</taxon>
        <taxon>Gammaproteobacteria</taxon>
        <taxon>Enterobacterales</taxon>
        <taxon>Erwiniaceae</taxon>
        <taxon>Buchnera</taxon>
    </lineage>
</organism>
<reference key="1">
    <citation type="journal article" date="2003" name="Proc. Natl. Acad. Sci. U.S.A.">
        <title>Reductive genome evolution in Buchnera aphidicola.</title>
        <authorList>
            <person name="van Ham R.C.H.J."/>
            <person name="Kamerbeek J."/>
            <person name="Palacios C."/>
            <person name="Rausell C."/>
            <person name="Abascal F."/>
            <person name="Bastolla U."/>
            <person name="Fernandez J.M."/>
            <person name="Jimenez L."/>
            <person name="Postigo M."/>
            <person name="Silva F.J."/>
            <person name="Tamames J."/>
            <person name="Viguera E."/>
            <person name="Latorre A."/>
            <person name="Valencia A."/>
            <person name="Moran F."/>
            <person name="Moya A."/>
        </authorList>
    </citation>
    <scope>NUCLEOTIDE SEQUENCE [LARGE SCALE GENOMIC DNA]</scope>
    <source>
        <strain>Bp</strain>
    </source>
</reference>
<keyword id="KW-0143">Chaperone</keyword>
<keyword id="KW-0963">Cytoplasm</keyword>
<keyword id="KW-0378">Hydrolase</keyword>
<keyword id="KW-1185">Reference proteome</keyword>
<keyword id="KW-0690">Ribosome biogenesis</keyword>
<keyword id="KW-0694">RNA-binding</keyword>
<keyword id="KW-0804">Transcription</keyword>
<keyword id="KW-0889">Transcription antitermination</keyword>
<keyword id="KW-0805">Transcription regulation</keyword>
<protein>
    <recommendedName>
        <fullName evidence="2">Nus factor SuhB</fullName>
    </recommendedName>
    <alternativeName>
        <fullName>Inositol-1-monophosphatase</fullName>
        <shortName>I-1-Pase</shortName>
        <shortName>IMPase</shortName>
        <shortName>Inositol-1-phosphatase</shortName>
        <ecNumber evidence="2">3.1.3.25</ecNumber>
    </alternativeName>
</protein>
<feature type="chain" id="PRO_0000142557" description="Nus factor SuhB">
    <location>
        <begin position="1"/>
        <end position="266"/>
    </location>
</feature>
<feature type="binding site" evidence="1">
    <location>
        <begin position="86"/>
        <end position="89"/>
    </location>
    <ligand>
        <name>substrate</name>
    </ligand>
</feature>
<comment type="function">
    <text evidence="2">Part of the processive rRNA transcription and antitermination complex (rrnTAC). The complex forms an RNA-chaperone ring around the RNA exit tunnel of RNA polymerase (RNAP). It supports rapid transcription and antitermination of rRNA operons, cotranscriptional rRNA folding, and annealing of distal rRNA regions to allow correct ribosome biogenesis. This subunit may play a central role in organizing the structure.</text>
</comment>
<comment type="catalytic activity">
    <reaction evidence="2">
        <text>a myo-inositol phosphate + H2O = myo-inositol + phosphate</text>
        <dbReference type="Rhea" id="RHEA:24056"/>
        <dbReference type="ChEBI" id="CHEBI:15377"/>
        <dbReference type="ChEBI" id="CHEBI:17268"/>
        <dbReference type="ChEBI" id="CHEBI:43474"/>
        <dbReference type="ChEBI" id="CHEBI:84139"/>
        <dbReference type="EC" id="3.1.3.25"/>
    </reaction>
</comment>
<comment type="cofactor">
    <cofactor evidence="2">
        <name>Mg(2+)</name>
        <dbReference type="ChEBI" id="CHEBI:18420"/>
    </cofactor>
</comment>
<comment type="subunit">
    <text evidence="2">Homodimer. The rRNA transcription and antitermination complex (rrnTAC) consists of RNA polymerase (RNAP), NusA, NusB, NusE (rpsJ), NusG, SubB, ribosomal protein S4, DNA and precursor rRNA; S4 is more flexible than other subunits.</text>
</comment>
<comment type="subcellular location">
    <subcellularLocation>
        <location evidence="2">Cytoplasm</location>
    </subcellularLocation>
</comment>
<comment type="similarity">
    <text evidence="3">Belongs to the inositol monophosphatase superfamily.</text>
</comment>
<proteinExistence type="inferred from homology"/>
<name>SUHB_BUCBP</name>
<accession>Q89AK9</accession>
<evidence type="ECO:0000250" key="1"/>
<evidence type="ECO:0000250" key="2">
    <source>
        <dbReference type="UniProtKB" id="P0ADG4"/>
    </source>
</evidence>
<evidence type="ECO:0000305" key="3"/>
<dbReference type="EC" id="3.1.3.25" evidence="2"/>
<dbReference type="EMBL" id="AE016826">
    <property type="protein sequence ID" value="AAO26990.1"/>
    <property type="molecule type" value="Genomic_DNA"/>
</dbReference>
<dbReference type="RefSeq" id="WP_011091391.1">
    <property type="nucleotide sequence ID" value="NC_004545.1"/>
</dbReference>
<dbReference type="SMR" id="Q89AK9"/>
<dbReference type="STRING" id="224915.bbp_264"/>
<dbReference type="KEGG" id="bab:bbp_264"/>
<dbReference type="eggNOG" id="COG0483">
    <property type="taxonomic scope" value="Bacteria"/>
</dbReference>
<dbReference type="HOGENOM" id="CLU_044118_0_0_6"/>
<dbReference type="OrthoDB" id="9785695at2"/>
<dbReference type="Proteomes" id="UP000000601">
    <property type="component" value="Chromosome"/>
</dbReference>
<dbReference type="GO" id="GO:0005737">
    <property type="term" value="C:cytoplasm"/>
    <property type="evidence" value="ECO:0007669"/>
    <property type="project" value="UniProtKB-SubCell"/>
</dbReference>
<dbReference type="GO" id="GO:0008934">
    <property type="term" value="F:inositol monophosphate 1-phosphatase activity"/>
    <property type="evidence" value="ECO:0007669"/>
    <property type="project" value="InterPro"/>
</dbReference>
<dbReference type="GO" id="GO:0003723">
    <property type="term" value="F:RNA binding"/>
    <property type="evidence" value="ECO:0007669"/>
    <property type="project" value="UniProtKB-KW"/>
</dbReference>
<dbReference type="GO" id="GO:0006020">
    <property type="term" value="P:inositol metabolic process"/>
    <property type="evidence" value="ECO:0007669"/>
    <property type="project" value="TreeGrafter"/>
</dbReference>
<dbReference type="GO" id="GO:0042254">
    <property type="term" value="P:ribosome biogenesis"/>
    <property type="evidence" value="ECO:0007669"/>
    <property type="project" value="UniProtKB-KW"/>
</dbReference>
<dbReference type="GO" id="GO:0007165">
    <property type="term" value="P:signal transduction"/>
    <property type="evidence" value="ECO:0007669"/>
    <property type="project" value="TreeGrafter"/>
</dbReference>
<dbReference type="GO" id="GO:0031564">
    <property type="term" value="P:transcription antitermination"/>
    <property type="evidence" value="ECO:0007669"/>
    <property type="project" value="UniProtKB-KW"/>
</dbReference>
<dbReference type="CDD" id="cd01639">
    <property type="entry name" value="IMPase"/>
    <property type="match status" value="1"/>
</dbReference>
<dbReference type="Gene3D" id="3.40.190.80">
    <property type="match status" value="1"/>
</dbReference>
<dbReference type="Gene3D" id="3.30.540.10">
    <property type="entry name" value="Fructose-1,6-Bisphosphatase, subunit A, domain 1"/>
    <property type="match status" value="1"/>
</dbReference>
<dbReference type="InterPro" id="IPR033942">
    <property type="entry name" value="IMPase"/>
</dbReference>
<dbReference type="InterPro" id="IPR000760">
    <property type="entry name" value="Inositol_monophosphatase-like"/>
</dbReference>
<dbReference type="PANTHER" id="PTHR20854">
    <property type="entry name" value="INOSITOL MONOPHOSPHATASE"/>
    <property type="match status" value="1"/>
</dbReference>
<dbReference type="PANTHER" id="PTHR20854:SF4">
    <property type="entry name" value="INOSITOL-1-MONOPHOSPHATASE-RELATED"/>
    <property type="match status" value="1"/>
</dbReference>
<dbReference type="Pfam" id="PF00459">
    <property type="entry name" value="Inositol_P"/>
    <property type="match status" value="1"/>
</dbReference>
<dbReference type="PRINTS" id="PR00377">
    <property type="entry name" value="IMPHPHTASES"/>
</dbReference>
<dbReference type="SUPFAM" id="SSF56655">
    <property type="entry name" value="Carbohydrate phosphatase"/>
    <property type="match status" value="1"/>
</dbReference>
<sequence length="266" mass="30496">MHPILNIAIRVARKCGNILIQYYDRNKTNNEKQILKKDFITKIIFVLEKTMIDMIHKSYPEHSIITYHKNNKIFKNTEIIWLINALDGIKNFENNLPHFCISIAIIVRKTTQISVIYDPIRNELFTSVKGQGSQLNGYRMRCKSTNTLKRSLVGLVYPCNNSKFQNYFFTIINLLFSHEVKLRCTGCISLDCAYVAMGRLDYLFNGNLIPLLFSSGSLQIKESGGLISDLNGGHDYVSSGIILIGNPKLMRVILVKIRELFQNNLK</sequence>